<proteinExistence type="evidence at protein level"/>
<comment type="function">
    <text evidence="1 6 7">mRNA-binding protein that acts as a regulator of mRNAs transport, translation and/or stability, and which is involved in neurogenesis, synaptic plasticity in neurons and cell proliferation and migration in multiple cell types (PubMed:15858068, PubMed:20516077). Plays an essential role in cytoplasmic stress granule formation (By similarity). Acts as an mRNA regulator by mediating formation of some phase-separated membraneless compartment: undergoes liquid-liquid phase separation upon binding to target mRNAs, leading to assemble mRNAs into cytoplasmic ribonucleoprotein granules that concentrate mRNAs with associated regulatory factors (By similarity). Undergoes liquid-liquid phase separation following phosphorylation and interaction with FMR1, promoting formation of cytoplasmic ribonucleoprotein granules that concentrate mRNAs with factors that inhibit translation and mediate deadenylation of target mRNAs (By similarity). In these cytoplasmic ribonucleoprotein granules, CAPRIN1 mediates recruitment of CNOT7 deadenylase, leading to mRNA deadenylation and degradation (By similarity). Binds directly and selectively to MYC and CCND2 mRNAs (By similarity). In neuronal cells, directly binds to several mRNAs associated with RNA granules, including BDNF, CAMK2A, CREB1, MAP2, NTRK2 mRNAs, as well as to GRIN1 and KPNB1 mRNAs, but not to rRNAs (By similarity).</text>
</comment>
<comment type="activity regulation">
    <text evidence="1">Ability to mediate liquid-liquid phase separation is regulated by ATP: moderate concentrations of ATP enhance phase separation, whereas high concentrations of ATP lead to inhibition of phase separation.</text>
</comment>
<comment type="subunit">
    <text evidence="1">May form homomultimers. Interacts with G3BP1; interaction is direct and promotes stress granule formation. Interacts with G3BP2; interaction is direct and promotes stress granule formation. Interacts with PQBP1. Interacts with DDX3X. Interacts (when phosphorylated by EPHA4) with FMR1; interaction with FMR1 promotes formation of a membraneless compartment.</text>
</comment>
<comment type="subcellular location">
    <subcellularLocation>
        <location evidence="1">Cytoplasm</location>
        <location evidence="1">Cytoplasmic ribonucleoprotein granule</location>
    </subcellularLocation>
    <subcellularLocation>
        <location evidence="1">Cytoplasm</location>
        <location evidence="1">Cytosol</location>
    </subcellularLocation>
    <subcellularLocation>
        <location evidence="6 7">Cell projection</location>
        <location evidence="6 7">Dendrite</location>
    </subcellularLocation>
    <subcellularLocation>
        <location evidence="1">Cell projection</location>
        <location evidence="1">Lamellipodium</location>
    </subcellularLocation>
    <text evidence="1">Mediates formation and localizes to cytoplasmic ribonucleoprotein membraneless compartments. Associated with RNA granules. At the leading edge of migrating fibroblasts, colocalizes with DDX3X.</text>
</comment>
<comment type="tissue specificity">
    <text evidence="6">Expressed in hippocampal and neocortical pyramidal neurons, but not in Purkinje cells.</text>
</comment>
<comment type="induction">
    <text evidence="5">Down-regulated by exposure to trichloroethylene (TCE) and dichloroethylene (DCE) in fetal heart.</text>
</comment>
<comment type="domain">
    <text evidence="1">The C-terminal disordered region undergoes liquid-liquid phase separation (LLPS) for the formation of a membraneless compartment that concentrates mRNAs with associated regulatory factors. CAPRIN1 molecules in the condensed phase are neutral. mRNA-binding promotes phase separation. Moderate concentrations of ATP enhance phase separation by reducing the electrostatic potential of CAPRIN1, thereby promoting intermolecular interactions. In contrast, high concentrations of ATP invert the electrostatic potential of CAPRIN1, so that CAPRIN1 molecules become negatively charged, lead to inhibition of phase separation.</text>
</comment>
<comment type="PTM">
    <text evidence="1">Tyrosine phosphorylation by EPHA4 promotes interaction with FMR1 and liquid-liquid phase separation (LLPS) for the formation of a membraneless compartment that concentrates mRNAs with associated regulatory factors.</text>
</comment>
<comment type="PTM">
    <text evidence="1">O-glycosylated (O-GlcNAcylated), in a cell cycle-dependent manner. O-glycosylation by OGT inhibit ability to undergo liquid-liquid phase separation (LLPS).</text>
</comment>
<comment type="similarity">
    <text evidence="9">Belongs to the caprin family.</text>
</comment>
<comment type="sequence caution" evidence="9">
    <conflict type="erroneous initiation">
        <sequence resource="EMBL-CDS" id="AAO21306"/>
    </conflict>
    <text>Truncated N-terminus.</text>
</comment>
<dbReference type="EMBL" id="AB373991">
    <property type="protein sequence ID" value="BAF98181.1"/>
    <property type="molecule type" value="mRNA"/>
</dbReference>
<dbReference type="EMBL" id="AABR03028010">
    <property type="status" value="NOT_ANNOTATED_CDS"/>
    <property type="molecule type" value="Genomic_DNA"/>
</dbReference>
<dbReference type="EMBL" id="AABR03028081">
    <property type="status" value="NOT_ANNOTATED_CDS"/>
    <property type="molecule type" value="Genomic_DNA"/>
</dbReference>
<dbReference type="EMBL" id="AABR03029653">
    <property type="status" value="NOT_ANNOTATED_CDS"/>
    <property type="molecule type" value="Genomic_DNA"/>
</dbReference>
<dbReference type="EMBL" id="BC087123">
    <property type="protein sequence ID" value="AAH87123.1"/>
    <property type="molecule type" value="mRNA"/>
</dbReference>
<dbReference type="EMBL" id="AY155572">
    <property type="protein sequence ID" value="AAO21306.1"/>
    <property type="status" value="ALT_INIT"/>
    <property type="molecule type" value="mRNA"/>
</dbReference>
<dbReference type="RefSeq" id="NP_001012185.2">
    <property type="nucleotide sequence ID" value="NM_001012185.3"/>
</dbReference>
<dbReference type="RefSeq" id="NP_001410093.1">
    <property type="nucleotide sequence ID" value="NM_001423164.1"/>
</dbReference>
<dbReference type="SMR" id="Q5M9G3"/>
<dbReference type="BioGRID" id="263241">
    <property type="interactions" value="3"/>
</dbReference>
<dbReference type="FunCoup" id="Q5M9G3">
    <property type="interactions" value="5400"/>
</dbReference>
<dbReference type="IntAct" id="Q5M9G3">
    <property type="interactions" value="2"/>
</dbReference>
<dbReference type="MINT" id="Q5M9G3"/>
<dbReference type="STRING" id="10116.ENSRNOP00000074604"/>
<dbReference type="GlyGen" id="Q5M9G3">
    <property type="glycosylation" value="2 sites"/>
</dbReference>
<dbReference type="iPTMnet" id="Q5M9G3"/>
<dbReference type="PhosphoSitePlus" id="Q5M9G3"/>
<dbReference type="jPOST" id="Q5M9G3"/>
<dbReference type="PaxDb" id="10116-ENSRNOP00000012428"/>
<dbReference type="GeneID" id="362173"/>
<dbReference type="KEGG" id="rno:362173"/>
<dbReference type="UCSC" id="RGD:1305707">
    <property type="organism name" value="rat"/>
</dbReference>
<dbReference type="AGR" id="RGD:1305707"/>
<dbReference type="CTD" id="4076"/>
<dbReference type="RGD" id="1305707">
    <property type="gene designation" value="Caprin1"/>
</dbReference>
<dbReference type="VEuPathDB" id="HostDB:ENSRNOG00000009152"/>
<dbReference type="eggNOG" id="ENOG502QUGC">
    <property type="taxonomic scope" value="Eukaryota"/>
</dbReference>
<dbReference type="InParanoid" id="Q5M9G3"/>
<dbReference type="PhylomeDB" id="Q5M9G3"/>
<dbReference type="CD-CODE" id="1E07FF65">
    <property type="entry name" value="Neuronal RNP granule"/>
</dbReference>
<dbReference type="PRO" id="PR:Q5M9G3"/>
<dbReference type="Proteomes" id="UP000002494">
    <property type="component" value="Chromosome 3"/>
</dbReference>
<dbReference type="Bgee" id="ENSRNOG00000009152">
    <property type="expression patterns" value="Expressed in spleen and 19 other cell types or tissues"/>
</dbReference>
<dbReference type="ExpressionAtlas" id="Q5M9G3">
    <property type="expression patterns" value="baseline and differential"/>
</dbReference>
<dbReference type="GO" id="GO:0031252">
    <property type="term" value="C:cell leading edge"/>
    <property type="evidence" value="ECO:0000250"/>
    <property type="project" value="UniProtKB"/>
</dbReference>
<dbReference type="GO" id="GO:0005737">
    <property type="term" value="C:cytoplasm"/>
    <property type="evidence" value="ECO:0000266"/>
    <property type="project" value="RGD"/>
</dbReference>
<dbReference type="GO" id="GO:0010494">
    <property type="term" value="C:cytoplasmic stress granule"/>
    <property type="evidence" value="ECO:0000314"/>
    <property type="project" value="UniProtKB"/>
</dbReference>
<dbReference type="GO" id="GO:0005829">
    <property type="term" value="C:cytosol"/>
    <property type="evidence" value="ECO:0007669"/>
    <property type="project" value="UniProtKB-SubCell"/>
</dbReference>
<dbReference type="GO" id="GO:0030425">
    <property type="term" value="C:dendrite"/>
    <property type="evidence" value="ECO:0000266"/>
    <property type="project" value="RGD"/>
</dbReference>
<dbReference type="GO" id="GO:0098978">
    <property type="term" value="C:glutamatergic synapse"/>
    <property type="evidence" value="ECO:0000314"/>
    <property type="project" value="SynGO"/>
</dbReference>
<dbReference type="GO" id="GO:0043232">
    <property type="term" value="C:intracellular membraneless organelle"/>
    <property type="evidence" value="ECO:0000266"/>
    <property type="project" value="RGD"/>
</dbReference>
<dbReference type="GO" id="GO:0030027">
    <property type="term" value="C:lamellipodium"/>
    <property type="evidence" value="ECO:0007669"/>
    <property type="project" value="UniProtKB-SubCell"/>
</dbReference>
<dbReference type="GO" id="GO:0000932">
    <property type="term" value="C:P-body"/>
    <property type="evidence" value="ECO:0000314"/>
    <property type="project" value="UniProtKB"/>
</dbReference>
<dbReference type="GO" id="GO:0098794">
    <property type="term" value="C:postsynapse"/>
    <property type="evidence" value="ECO:0000314"/>
    <property type="project" value="SynGO"/>
</dbReference>
<dbReference type="GO" id="GO:0045202">
    <property type="term" value="C:synapse"/>
    <property type="evidence" value="ECO:0000266"/>
    <property type="project" value="RGD"/>
</dbReference>
<dbReference type="GO" id="GO:0005524">
    <property type="term" value="F:ATP binding"/>
    <property type="evidence" value="ECO:0000250"/>
    <property type="project" value="UniProtKB"/>
</dbReference>
<dbReference type="GO" id="GO:0140693">
    <property type="term" value="F:molecular condensate scaffold activity"/>
    <property type="evidence" value="ECO:0000250"/>
    <property type="project" value="UniProtKB"/>
</dbReference>
<dbReference type="GO" id="GO:0140677">
    <property type="term" value="F:molecular function activator activity"/>
    <property type="evidence" value="ECO:0000266"/>
    <property type="project" value="RGD"/>
</dbReference>
<dbReference type="GO" id="GO:0003729">
    <property type="term" value="F:mRNA binding"/>
    <property type="evidence" value="ECO:0000266"/>
    <property type="project" value="RGD"/>
</dbReference>
<dbReference type="GO" id="GO:0003723">
    <property type="term" value="F:RNA binding"/>
    <property type="evidence" value="ECO:0000314"/>
    <property type="project" value="UniProtKB"/>
</dbReference>
<dbReference type="GO" id="GO:0035591">
    <property type="term" value="F:signaling adaptor activity"/>
    <property type="evidence" value="ECO:0000266"/>
    <property type="project" value="RGD"/>
</dbReference>
<dbReference type="GO" id="GO:0048699">
    <property type="term" value="P:generation of neurons"/>
    <property type="evidence" value="ECO:0000266"/>
    <property type="project" value="RGD"/>
</dbReference>
<dbReference type="GO" id="GO:0008298">
    <property type="term" value="P:intracellular mRNA localization"/>
    <property type="evidence" value="ECO:0000266"/>
    <property type="project" value="RGD"/>
</dbReference>
<dbReference type="GO" id="GO:0140694">
    <property type="term" value="P:membraneless organelle assembly"/>
    <property type="evidence" value="ECO:0000266"/>
    <property type="project" value="RGD"/>
</dbReference>
<dbReference type="GO" id="GO:0017148">
    <property type="term" value="P:negative regulation of translation"/>
    <property type="evidence" value="ECO:0000314"/>
    <property type="project" value="UniProtKB"/>
</dbReference>
<dbReference type="GO" id="GO:0007399">
    <property type="term" value="P:nervous system development"/>
    <property type="evidence" value="ECO:0000266"/>
    <property type="project" value="RGD"/>
</dbReference>
<dbReference type="GO" id="GO:0050775">
    <property type="term" value="P:positive regulation of dendrite morphogenesis"/>
    <property type="evidence" value="ECO:0000250"/>
    <property type="project" value="UniProtKB"/>
</dbReference>
<dbReference type="GO" id="GO:0061003">
    <property type="term" value="P:positive regulation of dendritic spine morphogenesis"/>
    <property type="evidence" value="ECO:0000250"/>
    <property type="project" value="UniProtKB"/>
</dbReference>
<dbReference type="GO" id="GO:0062029">
    <property type="term" value="P:positive regulation of stress granule assembly"/>
    <property type="evidence" value="ECO:0000250"/>
    <property type="project" value="UniProtKB"/>
</dbReference>
<dbReference type="GO" id="GO:0106288">
    <property type="term" value="P:regulation of deadenylation-dependent decapping of nuclear-transcribed mRNA"/>
    <property type="evidence" value="ECO:0000250"/>
    <property type="project" value="UniProtKB"/>
</dbReference>
<dbReference type="GO" id="GO:0007416">
    <property type="term" value="P:synapse assembly"/>
    <property type="evidence" value="ECO:0000266"/>
    <property type="project" value="RGD"/>
</dbReference>
<dbReference type="GO" id="GO:0050808">
    <property type="term" value="P:synapse organization"/>
    <property type="evidence" value="ECO:0000266"/>
    <property type="project" value="RGD"/>
</dbReference>
<dbReference type="InterPro" id="IPR028816">
    <property type="entry name" value="Caprin"/>
</dbReference>
<dbReference type="InterPro" id="IPR022070">
    <property type="entry name" value="Caprin-1_C"/>
</dbReference>
<dbReference type="InterPro" id="IPR041637">
    <property type="entry name" value="Caprin-1_dimer"/>
</dbReference>
<dbReference type="PANTHER" id="PTHR22922:SF3">
    <property type="entry name" value="CAPRIN-1"/>
    <property type="match status" value="1"/>
</dbReference>
<dbReference type="PANTHER" id="PTHR22922">
    <property type="entry name" value="GPI-ANCHORED PROTEIN P137"/>
    <property type="match status" value="1"/>
</dbReference>
<dbReference type="Pfam" id="PF12287">
    <property type="entry name" value="Caprin-1_C"/>
    <property type="match status" value="1"/>
</dbReference>
<dbReference type="Pfam" id="PF18293">
    <property type="entry name" value="Caprin-1_dimer"/>
    <property type="match status" value="1"/>
</dbReference>
<reference key="1">
    <citation type="journal article" date="2005" name="J. Neurosci.">
        <title>A novel RNA-binding protein in neuronal RNA granules: regulatory machinery for local translation.</title>
        <authorList>
            <person name="Shiina N."/>
            <person name="Shinkura K."/>
            <person name="Tokunaga M."/>
        </authorList>
    </citation>
    <scope>NUCLEOTIDE SEQUENCE [MRNA]</scope>
    <scope>FUNCTION</scope>
    <scope>SUBCELLULAR LOCATION</scope>
    <scope>MRNA-BINDING</scope>
    <scope>TISSUE SPECIFICITY</scope>
</reference>
<reference key="2">
    <citation type="journal article" date="2004" name="Nature">
        <title>Genome sequence of the Brown Norway rat yields insights into mammalian evolution.</title>
        <authorList>
            <person name="Gibbs R.A."/>
            <person name="Weinstock G.M."/>
            <person name="Metzker M.L."/>
            <person name="Muzny D.M."/>
            <person name="Sodergren E.J."/>
            <person name="Scherer S."/>
            <person name="Scott G."/>
            <person name="Steffen D."/>
            <person name="Worley K.C."/>
            <person name="Burch P.E."/>
            <person name="Okwuonu G."/>
            <person name="Hines S."/>
            <person name="Lewis L."/>
            <person name="Deramo C."/>
            <person name="Delgado O."/>
            <person name="Dugan-Rocha S."/>
            <person name="Miner G."/>
            <person name="Morgan M."/>
            <person name="Hawes A."/>
            <person name="Gill R."/>
            <person name="Holt R.A."/>
            <person name="Adams M.D."/>
            <person name="Amanatides P.G."/>
            <person name="Baden-Tillson H."/>
            <person name="Barnstead M."/>
            <person name="Chin S."/>
            <person name="Evans C.A."/>
            <person name="Ferriera S."/>
            <person name="Fosler C."/>
            <person name="Glodek A."/>
            <person name="Gu Z."/>
            <person name="Jennings D."/>
            <person name="Kraft C.L."/>
            <person name="Nguyen T."/>
            <person name="Pfannkoch C.M."/>
            <person name="Sitter C."/>
            <person name="Sutton G.G."/>
            <person name="Venter J.C."/>
            <person name="Woodage T."/>
            <person name="Smith D."/>
            <person name="Lee H.-M."/>
            <person name="Gustafson E."/>
            <person name="Cahill P."/>
            <person name="Kana A."/>
            <person name="Doucette-Stamm L."/>
            <person name="Weinstock K."/>
            <person name="Fechtel K."/>
            <person name="Weiss R.B."/>
            <person name="Dunn D.M."/>
            <person name="Green E.D."/>
            <person name="Blakesley R.W."/>
            <person name="Bouffard G.G."/>
            <person name="De Jong P.J."/>
            <person name="Osoegawa K."/>
            <person name="Zhu B."/>
            <person name="Marra M."/>
            <person name="Schein J."/>
            <person name="Bosdet I."/>
            <person name="Fjell C."/>
            <person name="Jones S."/>
            <person name="Krzywinski M."/>
            <person name="Mathewson C."/>
            <person name="Siddiqui A."/>
            <person name="Wye N."/>
            <person name="McPherson J."/>
            <person name="Zhao S."/>
            <person name="Fraser C.M."/>
            <person name="Shetty J."/>
            <person name="Shatsman S."/>
            <person name="Geer K."/>
            <person name="Chen Y."/>
            <person name="Abramzon S."/>
            <person name="Nierman W.C."/>
            <person name="Havlak P.H."/>
            <person name="Chen R."/>
            <person name="Durbin K.J."/>
            <person name="Egan A."/>
            <person name="Ren Y."/>
            <person name="Song X.-Z."/>
            <person name="Li B."/>
            <person name="Liu Y."/>
            <person name="Qin X."/>
            <person name="Cawley S."/>
            <person name="Cooney A.J."/>
            <person name="D'Souza L.M."/>
            <person name="Martin K."/>
            <person name="Wu J.Q."/>
            <person name="Gonzalez-Garay M.L."/>
            <person name="Jackson A.R."/>
            <person name="Kalafus K.J."/>
            <person name="McLeod M.P."/>
            <person name="Milosavljevic A."/>
            <person name="Virk D."/>
            <person name="Volkov A."/>
            <person name="Wheeler D.A."/>
            <person name="Zhang Z."/>
            <person name="Bailey J.A."/>
            <person name="Eichler E.E."/>
            <person name="Tuzun E."/>
            <person name="Birney E."/>
            <person name="Mongin E."/>
            <person name="Ureta-Vidal A."/>
            <person name="Woodwark C."/>
            <person name="Zdobnov E."/>
            <person name="Bork P."/>
            <person name="Suyama M."/>
            <person name="Torrents D."/>
            <person name="Alexandersson M."/>
            <person name="Trask B.J."/>
            <person name="Young J.M."/>
            <person name="Huang H."/>
            <person name="Wang H."/>
            <person name="Xing H."/>
            <person name="Daniels S."/>
            <person name="Gietzen D."/>
            <person name="Schmidt J."/>
            <person name="Stevens K."/>
            <person name="Vitt U."/>
            <person name="Wingrove J."/>
            <person name="Camara F."/>
            <person name="Mar Alba M."/>
            <person name="Abril J.F."/>
            <person name="Guigo R."/>
            <person name="Smit A."/>
            <person name="Dubchak I."/>
            <person name="Rubin E.M."/>
            <person name="Couronne O."/>
            <person name="Poliakov A."/>
            <person name="Huebner N."/>
            <person name="Ganten D."/>
            <person name="Goesele C."/>
            <person name="Hummel O."/>
            <person name="Kreitler T."/>
            <person name="Lee Y.-A."/>
            <person name="Monti J."/>
            <person name="Schulz H."/>
            <person name="Zimdahl H."/>
            <person name="Himmelbauer H."/>
            <person name="Lehrach H."/>
            <person name="Jacob H.J."/>
            <person name="Bromberg S."/>
            <person name="Gullings-Handley J."/>
            <person name="Jensen-Seaman M.I."/>
            <person name="Kwitek A.E."/>
            <person name="Lazar J."/>
            <person name="Pasko D."/>
            <person name="Tonellato P.J."/>
            <person name="Twigger S."/>
            <person name="Ponting C.P."/>
            <person name="Duarte J.M."/>
            <person name="Rice S."/>
            <person name="Goodstadt L."/>
            <person name="Beatson S.A."/>
            <person name="Emes R.D."/>
            <person name="Winter E.E."/>
            <person name="Webber C."/>
            <person name="Brandt P."/>
            <person name="Nyakatura G."/>
            <person name="Adetobi M."/>
            <person name="Chiaromonte F."/>
            <person name="Elnitski L."/>
            <person name="Eswara P."/>
            <person name="Hardison R.C."/>
            <person name="Hou M."/>
            <person name="Kolbe D."/>
            <person name="Makova K."/>
            <person name="Miller W."/>
            <person name="Nekrutenko A."/>
            <person name="Riemer C."/>
            <person name="Schwartz S."/>
            <person name="Taylor J."/>
            <person name="Yang S."/>
            <person name="Zhang Y."/>
            <person name="Lindpaintner K."/>
            <person name="Andrews T.D."/>
            <person name="Caccamo M."/>
            <person name="Clamp M."/>
            <person name="Clarke L."/>
            <person name="Curwen V."/>
            <person name="Durbin R.M."/>
            <person name="Eyras E."/>
            <person name="Searle S.M."/>
            <person name="Cooper G.M."/>
            <person name="Batzoglou S."/>
            <person name="Brudno M."/>
            <person name="Sidow A."/>
            <person name="Stone E.A."/>
            <person name="Payseur B.A."/>
            <person name="Bourque G."/>
            <person name="Lopez-Otin C."/>
            <person name="Puente X.S."/>
            <person name="Chakrabarti K."/>
            <person name="Chatterji S."/>
            <person name="Dewey C."/>
            <person name="Pachter L."/>
            <person name="Bray N."/>
            <person name="Yap V.B."/>
            <person name="Caspi A."/>
            <person name="Tesler G."/>
            <person name="Pevzner P.A."/>
            <person name="Haussler D."/>
            <person name="Roskin K.M."/>
            <person name="Baertsch R."/>
            <person name="Clawson H."/>
            <person name="Furey T.S."/>
            <person name="Hinrichs A.S."/>
            <person name="Karolchik D."/>
            <person name="Kent W.J."/>
            <person name="Rosenbloom K.R."/>
            <person name="Trumbower H."/>
            <person name="Weirauch M."/>
            <person name="Cooper D.N."/>
            <person name="Stenson P.D."/>
            <person name="Ma B."/>
            <person name="Brent M."/>
            <person name="Arumugam M."/>
            <person name="Shteynberg D."/>
            <person name="Copley R.R."/>
            <person name="Taylor M.S."/>
            <person name="Riethman H."/>
            <person name="Mudunuri U."/>
            <person name="Peterson J."/>
            <person name="Guyer M."/>
            <person name="Felsenfeld A."/>
            <person name="Old S."/>
            <person name="Mockrin S."/>
            <person name="Collins F.S."/>
        </authorList>
    </citation>
    <scope>NUCLEOTIDE SEQUENCE [LARGE SCALE GENOMIC DNA] OF 1-70; 121-430 AND 518-686</scope>
    <source>
        <strain>Brown Norway</strain>
    </source>
</reference>
<reference key="3">
    <citation type="journal article" date="2004" name="Genome Res.">
        <title>The status, quality, and expansion of the NIH full-length cDNA project: the Mammalian Gene Collection (MGC).</title>
        <authorList>
            <consortium name="The MGC Project Team"/>
        </authorList>
    </citation>
    <scope>NUCLEOTIDE SEQUENCE [LARGE SCALE MRNA] OF 16-707</scope>
    <source>
        <tissue>Kidney</tissue>
    </source>
</reference>
<reference key="4">
    <citation type="journal article" date="2003" name="Birth Defects Res. A Clin. Mol. Teratol.">
        <title>Trichloroethylene effects on gene expression during cardiac development.</title>
        <authorList>
            <person name="Collier J.M."/>
            <person name="Selmin O."/>
            <person name="Johnson P.D."/>
            <person name="Runyan R.B."/>
        </authorList>
    </citation>
    <scope>NUCLEOTIDE SEQUENCE [MRNA] OF 21-707</scope>
    <scope>INDUCTION</scope>
    <source>
        <strain>Sprague-Dawley</strain>
        <tissue>Fetal heart</tissue>
    </source>
</reference>
<reference key="5">
    <citation type="journal article" date="2010" name="J. Biol. Chem.">
        <title>RNA granule protein 140 (RNG140), a paralog of RNG105 localized to distinct RNA granules in neuronal dendrites in the adult vertebrate brain.</title>
        <authorList>
            <person name="Shiina N."/>
            <person name="Tokunaga M."/>
        </authorList>
    </citation>
    <scope>FUNCTION</scope>
    <scope>SUBCELLULAR LOCATION</scope>
    <scope>RNA-BINDING</scope>
</reference>
<reference key="6">
    <citation type="journal article" date="2012" name="Nat. Commun.">
        <title>Quantitative maps of protein phosphorylation sites across 14 different rat organs and tissues.</title>
        <authorList>
            <person name="Lundby A."/>
            <person name="Secher A."/>
            <person name="Lage K."/>
            <person name="Nordsborg N.B."/>
            <person name="Dmytriyev A."/>
            <person name="Lundby C."/>
            <person name="Olsen J.V."/>
        </authorList>
    </citation>
    <scope>IDENTIFICATION BY MASS SPECTROMETRY [LARGE SCALE ANALYSIS]</scope>
</reference>
<sequence length="707" mass="78121">MPSATSHSGSGSKSSGPPPPSGSSGSEAAAGAAAPASQHPATGTGAVQTEAMKQILGVIDKKLRNLEKKKGKLDDYQERMNKGERLNQDQLDAVSKYQEVTNNLEFAKELQRSFMALSQDIQKTIKKTARREQLMREEAEQKRLKTVLELQYVLDKLGDDDVRTDLKQGLSGVPILSEEELSLLDEFYKLVDPERDMSLRLNEQYEHASIHLWDLLEGKEKPVCGTTYKALKEIVERVFQSNYFDSTHNHQNGLCEEEEAASAPIVEDQVAEAEPEPTEEYTEQSEVESTEYVNRQFMAETQFSSGEKEQVDEWAVETVEVVNSLQQQPQAASPSVPEPHSLTPVAQSDPLVRRQRVQDLMAQMQGPYNFIQDSMLDFENQTLDPAIVSAQPMNPTQNMDMPQLVCPQVHSESRLAQSNQVPVQPEATQVPLVSSTSEGYTASQPLYQPSHAAEQRPQKEPIDQIQATISLNTEQTTASSSLPAASQPQVFQAGASKPLHSSGINVNAAPFQSMQTVFNMNAPVPPVNEPETLKQQSQYQASYNQSFSSQPHQVEQTELQQDQLQTVVGTYHGSQDQPHQVPGNHQQPPQQSTGFPRSSQPYYNSRGVSRGGSRGARGLMNGYRGPANGFRGGYDGYRSSFSNTPNSGYTQSQFNAPRDYSGYQRDGYQQNFKRGSGQSGPRGAPRGRGGPPRPNRGMPQMNTQQVN</sequence>
<organism>
    <name type="scientific">Rattus norvegicus</name>
    <name type="common">Rat</name>
    <dbReference type="NCBI Taxonomy" id="10116"/>
    <lineage>
        <taxon>Eukaryota</taxon>
        <taxon>Metazoa</taxon>
        <taxon>Chordata</taxon>
        <taxon>Craniata</taxon>
        <taxon>Vertebrata</taxon>
        <taxon>Euteleostomi</taxon>
        <taxon>Mammalia</taxon>
        <taxon>Eutheria</taxon>
        <taxon>Euarchontoglires</taxon>
        <taxon>Glires</taxon>
        <taxon>Rodentia</taxon>
        <taxon>Myomorpha</taxon>
        <taxon>Muroidea</taxon>
        <taxon>Muridae</taxon>
        <taxon>Murinae</taxon>
        <taxon>Rattus</taxon>
    </lineage>
</organism>
<name>CAPR1_RAT</name>
<evidence type="ECO:0000250" key="1">
    <source>
        <dbReference type="UniProtKB" id="Q14444"/>
    </source>
</evidence>
<evidence type="ECO:0000250" key="2">
    <source>
        <dbReference type="UniProtKB" id="Q60865"/>
    </source>
</evidence>
<evidence type="ECO:0000255" key="3"/>
<evidence type="ECO:0000256" key="4">
    <source>
        <dbReference type="SAM" id="MobiDB-lite"/>
    </source>
</evidence>
<evidence type="ECO:0000269" key="5">
    <source>
    </source>
</evidence>
<evidence type="ECO:0000269" key="6">
    <source>
    </source>
</evidence>
<evidence type="ECO:0000269" key="7">
    <source>
    </source>
</evidence>
<evidence type="ECO:0000303" key="8">
    <source>
    </source>
</evidence>
<evidence type="ECO:0000305" key="9"/>
<feature type="initiator methionine" description="Removed" evidence="1">
    <location>
        <position position="1"/>
    </location>
</feature>
<feature type="chain" id="PRO_0000327209" description="Caprin-1">
    <location>
        <begin position="2"/>
        <end position="707"/>
    </location>
</feature>
<feature type="region of interest" description="Disordered" evidence="4">
    <location>
        <begin position="1"/>
        <end position="48"/>
    </location>
</feature>
<feature type="region of interest" description="Disordered" evidence="4">
    <location>
        <begin position="325"/>
        <end position="347"/>
    </location>
</feature>
<feature type="region of interest" description="G3BP1-binding" evidence="1">
    <location>
        <begin position="358"/>
        <end position="379"/>
    </location>
</feature>
<feature type="region of interest" description="Disordered" evidence="4">
    <location>
        <begin position="412"/>
        <end position="443"/>
    </location>
</feature>
<feature type="region of interest" description="Disordered" evidence="4">
    <location>
        <begin position="523"/>
        <end position="558"/>
    </location>
</feature>
<feature type="region of interest" description="Disordered" evidence="4">
    <location>
        <begin position="570"/>
        <end position="620"/>
    </location>
</feature>
<feature type="region of interest" description="Disordered" evidence="4">
    <location>
        <begin position="641"/>
        <end position="707"/>
    </location>
</feature>
<feature type="coiled-coil region" evidence="3">
    <location>
        <begin position="58"/>
        <end position="92"/>
    </location>
</feature>
<feature type="coiled-coil region" evidence="3">
    <location>
        <begin position="123"/>
        <end position="151"/>
    </location>
</feature>
<feature type="compositionally biased region" description="Low complexity" evidence="4">
    <location>
        <begin position="1"/>
        <end position="15"/>
    </location>
</feature>
<feature type="compositionally biased region" description="Low complexity" evidence="4">
    <location>
        <begin position="22"/>
        <end position="43"/>
    </location>
</feature>
<feature type="compositionally biased region" description="Low complexity" evidence="4">
    <location>
        <begin position="326"/>
        <end position="335"/>
    </location>
</feature>
<feature type="compositionally biased region" description="Polar residues" evidence="4">
    <location>
        <begin position="431"/>
        <end position="443"/>
    </location>
</feature>
<feature type="compositionally biased region" description="Low complexity" evidence="4">
    <location>
        <begin position="535"/>
        <end position="558"/>
    </location>
</feature>
<feature type="compositionally biased region" description="Polar residues" evidence="4">
    <location>
        <begin position="572"/>
        <end position="603"/>
    </location>
</feature>
<feature type="compositionally biased region" description="Polar residues" evidence="4">
    <location>
        <begin position="641"/>
        <end position="655"/>
    </location>
</feature>
<feature type="compositionally biased region" description="Low complexity" evidence="4">
    <location>
        <begin position="674"/>
        <end position="684"/>
    </location>
</feature>
<feature type="compositionally biased region" description="Low complexity" evidence="4">
    <location>
        <begin position="695"/>
        <end position="707"/>
    </location>
</feature>
<feature type="modified residue" description="N-acetylproline" evidence="1">
    <location>
        <position position="2"/>
    </location>
</feature>
<feature type="modified residue" description="Phosphoserine" evidence="1">
    <location>
        <position position="10"/>
    </location>
</feature>
<feature type="modified residue" description="Phosphoserine" evidence="1">
    <location>
        <position position="113"/>
    </location>
</feature>
<feature type="modified residue" description="Omega-N-methylarginine" evidence="2">
    <location>
        <position position="163"/>
    </location>
</feature>
<feature type="modified residue" description="Phosphoserine" evidence="1">
    <location>
        <position position="333"/>
    </location>
</feature>
<feature type="modified residue" description="Phosphoserine" evidence="1">
    <location>
        <position position="341"/>
    </location>
</feature>
<feature type="modified residue" description="Phosphotyrosine" evidence="1">
    <location>
        <position position="623"/>
    </location>
</feature>
<feature type="modified residue" description="Omega-N-methylarginine" evidence="1">
    <location>
        <position position="624"/>
    </location>
</feature>
<feature type="modified residue" description="Omega-N-methylarginine" evidence="1">
    <location>
        <position position="631"/>
    </location>
</feature>
<feature type="modified residue" description="Phosphotyrosine" evidence="1">
    <location>
        <position position="634"/>
    </location>
</feature>
<feature type="modified residue" description="Phosphotyrosine" evidence="1">
    <location>
        <position position="637"/>
    </location>
</feature>
<feature type="modified residue" description="Omega-N-methylarginine" evidence="1">
    <location>
        <position position="638"/>
    </location>
</feature>
<feature type="modified residue" description="Phosphotyrosine" evidence="1">
    <location>
        <position position="649"/>
    </location>
</feature>
<feature type="modified residue" description="Phosphotyrosine" evidence="1">
    <location>
        <position position="660"/>
    </location>
</feature>
<feature type="modified residue" description="Phosphotyrosine" evidence="1">
    <location>
        <position position="663"/>
    </location>
</feature>
<feature type="modified residue" description="Phosphotyrosine" evidence="1">
    <location>
        <position position="668"/>
    </location>
</feature>
<feature type="modified residue" description="Asymmetric dimethylarginine; alternate" evidence="1">
    <location>
        <position position="696"/>
    </location>
</feature>
<feature type="modified residue" description="Omega-N-methylarginine; alternate" evidence="1">
    <location>
        <position position="696"/>
    </location>
</feature>
<feature type="glycosylation site" description="O-linked (GlcNAc) serine" evidence="1">
    <location>
        <position position="642"/>
    </location>
</feature>
<feature type="glycosylation site" description="O-linked (GlcNAc) serine" evidence="1">
    <location>
        <position position="647"/>
    </location>
</feature>
<feature type="sequence conflict" description="In Ref. 4; AAO21306." evidence="9" ref="4">
    <original>E</original>
    <variation>K</variation>
    <location>
        <position position="27"/>
    </location>
</feature>
<feature type="sequence conflict" description="In Ref. 4; AAO21306." evidence="9" ref="4">
    <original>Q</original>
    <variation>E</variation>
    <location>
        <position position="48"/>
    </location>
</feature>
<feature type="sequence conflict" description="In Ref. 4; AAO21306." evidence="9" ref="4">
    <original>Q</original>
    <variation>Y</variation>
    <location>
        <position position="372"/>
    </location>
</feature>
<feature type="sequence conflict" description="In Ref. 4; AAO21306." evidence="9" ref="4">
    <original>T</original>
    <variation>A</variation>
    <location>
        <position position="396"/>
    </location>
</feature>
<feature type="sequence conflict" description="In Ref. 4; AAO21306." evidence="9" ref="4">
    <original>S</original>
    <variation>N</variation>
    <location>
        <position position="537"/>
    </location>
</feature>
<feature type="sequence conflict" description="In Ref. 4; AAO21306." evidence="9" ref="4">
    <original>T</original>
    <variation>Q</variation>
    <location>
        <position position="557"/>
    </location>
</feature>
<feature type="sequence conflict" description="In Ref. 4; AAO21306." evidence="9" ref="4">
    <original>Y</original>
    <variation>F</variation>
    <location>
        <position position="571"/>
    </location>
</feature>
<feature type="sequence conflict" description="In Ref. 4; AAO21306." evidence="9" ref="4">
    <original>P</original>
    <variation>L</variation>
    <location>
        <position position="582"/>
    </location>
</feature>
<feature type="sequence conflict" description="In Ref. 4; AAO21306." evidence="9" ref="4">
    <original>QP</original>
    <variation>AA</variation>
    <location>
        <begin position="587"/>
        <end position="588"/>
    </location>
</feature>
<accession>Q5M9G3</accession>
<accession>A9ZSZ9</accession>
<accession>Q6YF16</accession>
<protein>
    <recommendedName>
        <fullName>Caprin-1</fullName>
    </recommendedName>
    <alternativeName>
        <fullName>Cytoplasmic activation- and proliferation-associated protein 1</fullName>
    </alternativeName>
    <alternativeName>
        <fullName>GPI-anchored protein p137</fullName>
        <shortName>GPI-p137</shortName>
        <shortName>p137GPI</shortName>
    </alternativeName>
    <alternativeName>
        <fullName evidence="8">RNA granule protein 105</fullName>
    </alternativeName>
</protein>
<gene>
    <name type="primary">Caprin1</name>
    <name type="synonym">Gpiap1</name>
    <name evidence="8" type="synonym">Rng105</name>
</gene>
<keyword id="KW-0007">Acetylation</keyword>
<keyword id="KW-0067">ATP-binding</keyword>
<keyword id="KW-0966">Cell projection</keyword>
<keyword id="KW-0175">Coiled coil</keyword>
<keyword id="KW-0963">Cytoplasm</keyword>
<keyword id="KW-0221">Differentiation</keyword>
<keyword id="KW-0325">Glycoprotein</keyword>
<keyword id="KW-0488">Methylation</keyword>
<keyword id="KW-0547">Nucleotide-binding</keyword>
<keyword id="KW-0597">Phosphoprotein</keyword>
<keyword id="KW-0652">Protein synthesis inhibitor</keyword>
<keyword id="KW-1185">Reference proteome</keyword>
<keyword id="KW-0694">RNA-binding</keyword>